<name>PYRB_BRUO2</name>
<keyword id="KW-0665">Pyrimidine biosynthesis</keyword>
<keyword id="KW-0808">Transferase</keyword>
<organism>
    <name type="scientific">Brucella ovis (strain ATCC 25840 / 63/290 / NCTC 10512)</name>
    <dbReference type="NCBI Taxonomy" id="444178"/>
    <lineage>
        <taxon>Bacteria</taxon>
        <taxon>Pseudomonadati</taxon>
        <taxon>Pseudomonadota</taxon>
        <taxon>Alphaproteobacteria</taxon>
        <taxon>Hyphomicrobiales</taxon>
        <taxon>Brucellaceae</taxon>
        <taxon>Brucella/Ochrobactrum group</taxon>
        <taxon>Brucella</taxon>
    </lineage>
</organism>
<accession>A5VUT1</accession>
<evidence type="ECO:0000255" key="1">
    <source>
        <dbReference type="HAMAP-Rule" id="MF_00001"/>
    </source>
</evidence>
<comment type="function">
    <text evidence="1">Catalyzes the condensation of carbamoyl phosphate and aspartate to form carbamoyl aspartate and inorganic phosphate, the committed step in the de novo pyrimidine nucleotide biosynthesis pathway.</text>
</comment>
<comment type="catalytic activity">
    <reaction evidence="1">
        <text>carbamoyl phosphate + L-aspartate = N-carbamoyl-L-aspartate + phosphate + H(+)</text>
        <dbReference type="Rhea" id="RHEA:20013"/>
        <dbReference type="ChEBI" id="CHEBI:15378"/>
        <dbReference type="ChEBI" id="CHEBI:29991"/>
        <dbReference type="ChEBI" id="CHEBI:32814"/>
        <dbReference type="ChEBI" id="CHEBI:43474"/>
        <dbReference type="ChEBI" id="CHEBI:58228"/>
        <dbReference type="EC" id="2.1.3.2"/>
    </reaction>
</comment>
<comment type="pathway">
    <text evidence="1">Pyrimidine metabolism; UMP biosynthesis via de novo pathway; (S)-dihydroorotate from bicarbonate: step 2/3.</text>
</comment>
<comment type="subunit">
    <text evidence="1">Heterododecamer (2C3:3R2) of six catalytic PyrB chains organized as two trimers (C3), and six regulatory PyrI chains organized as three dimers (R2).</text>
</comment>
<comment type="similarity">
    <text evidence="1">Belongs to the aspartate/ornithine carbamoyltransferase superfamily. ATCase family.</text>
</comment>
<feature type="chain" id="PRO_1000000002" description="Aspartate carbamoyltransferase catalytic subunit">
    <location>
        <begin position="1"/>
        <end position="322"/>
    </location>
</feature>
<feature type="binding site" evidence="1">
    <location>
        <position position="65"/>
    </location>
    <ligand>
        <name>carbamoyl phosphate</name>
        <dbReference type="ChEBI" id="CHEBI:58228"/>
    </ligand>
</feature>
<feature type="binding site" evidence="1">
    <location>
        <position position="66"/>
    </location>
    <ligand>
        <name>carbamoyl phosphate</name>
        <dbReference type="ChEBI" id="CHEBI:58228"/>
    </ligand>
</feature>
<feature type="binding site" evidence="1">
    <location>
        <position position="93"/>
    </location>
    <ligand>
        <name>L-aspartate</name>
        <dbReference type="ChEBI" id="CHEBI:29991"/>
    </ligand>
</feature>
<feature type="binding site" evidence="1">
    <location>
        <position position="115"/>
    </location>
    <ligand>
        <name>carbamoyl phosphate</name>
        <dbReference type="ChEBI" id="CHEBI:58228"/>
    </ligand>
</feature>
<feature type="binding site" evidence="1">
    <location>
        <position position="143"/>
    </location>
    <ligand>
        <name>carbamoyl phosphate</name>
        <dbReference type="ChEBI" id="CHEBI:58228"/>
    </ligand>
</feature>
<feature type="binding site" evidence="1">
    <location>
        <position position="146"/>
    </location>
    <ligand>
        <name>carbamoyl phosphate</name>
        <dbReference type="ChEBI" id="CHEBI:58228"/>
    </ligand>
</feature>
<feature type="binding site" evidence="1">
    <location>
        <position position="176"/>
    </location>
    <ligand>
        <name>L-aspartate</name>
        <dbReference type="ChEBI" id="CHEBI:29991"/>
    </ligand>
</feature>
<feature type="binding site" evidence="1">
    <location>
        <position position="230"/>
    </location>
    <ligand>
        <name>L-aspartate</name>
        <dbReference type="ChEBI" id="CHEBI:29991"/>
    </ligand>
</feature>
<feature type="binding site" evidence="1">
    <location>
        <position position="271"/>
    </location>
    <ligand>
        <name>carbamoyl phosphate</name>
        <dbReference type="ChEBI" id="CHEBI:58228"/>
    </ligand>
</feature>
<feature type="binding site" evidence="1">
    <location>
        <position position="272"/>
    </location>
    <ligand>
        <name>carbamoyl phosphate</name>
        <dbReference type="ChEBI" id="CHEBI:58228"/>
    </ligand>
</feature>
<dbReference type="EC" id="2.1.3.2" evidence="1"/>
<dbReference type="EMBL" id="CP000709">
    <property type="protein sequence ID" value="ABQ62863.1"/>
    <property type="molecule type" value="Genomic_DNA"/>
</dbReference>
<dbReference type="RefSeq" id="WP_002966034.1">
    <property type="nucleotide sequence ID" value="NC_009504.1"/>
</dbReference>
<dbReference type="SMR" id="A5VUT1"/>
<dbReference type="KEGG" id="bov:BOV_A0564"/>
<dbReference type="HOGENOM" id="CLU_043846_2_0_5"/>
<dbReference type="PhylomeDB" id="A5VUT1"/>
<dbReference type="UniPathway" id="UPA00070">
    <property type="reaction ID" value="UER00116"/>
</dbReference>
<dbReference type="PRO" id="PR:A5VUT1"/>
<dbReference type="Proteomes" id="UP000006383">
    <property type="component" value="Chromosome II"/>
</dbReference>
<dbReference type="GO" id="GO:0005829">
    <property type="term" value="C:cytosol"/>
    <property type="evidence" value="ECO:0007669"/>
    <property type="project" value="TreeGrafter"/>
</dbReference>
<dbReference type="GO" id="GO:0016597">
    <property type="term" value="F:amino acid binding"/>
    <property type="evidence" value="ECO:0007669"/>
    <property type="project" value="InterPro"/>
</dbReference>
<dbReference type="GO" id="GO:0004070">
    <property type="term" value="F:aspartate carbamoyltransferase activity"/>
    <property type="evidence" value="ECO:0007669"/>
    <property type="project" value="UniProtKB-UniRule"/>
</dbReference>
<dbReference type="GO" id="GO:0006207">
    <property type="term" value="P:'de novo' pyrimidine nucleobase biosynthetic process"/>
    <property type="evidence" value="ECO:0007669"/>
    <property type="project" value="InterPro"/>
</dbReference>
<dbReference type="GO" id="GO:0044205">
    <property type="term" value="P:'de novo' UMP biosynthetic process"/>
    <property type="evidence" value="ECO:0007669"/>
    <property type="project" value="UniProtKB-UniRule"/>
</dbReference>
<dbReference type="GO" id="GO:0006520">
    <property type="term" value="P:amino acid metabolic process"/>
    <property type="evidence" value="ECO:0007669"/>
    <property type="project" value="InterPro"/>
</dbReference>
<dbReference type="FunFam" id="3.40.50.1370:FF:000007">
    <property type="entry name" value="Aspartate carbamoyltransferase"/>
    <property type="match status" value="1"/>
</dbReference>
<dbReference type="Gene3D" id="3.40.50.1370">
    <property type="entry name" value="Aspartate/ornithine carbamoyltransferase"/>
    <property type="match status" value="2"/>
</dbReference>
<dbReference type="HAMAP" id="MF_00001">
    <property type="entry name" value="Asp_carb_tr"/>
    <property type="match status" value="1"/>
</dbReference>
<dbReference type="InterPro" id="IPR006132">
    <property type="entry name" value="Asp/Orn_carbamoyltranf_P-bd"/>
</dbReference>
<dbReference type="InterPro" id="IPR006130">
    <property type="entry name" value="Asp/Orn_carbamoylTrfase"/>
</dbReference>
<dbReference type="InterPro" id="IPR036901">
    <property type="entry name" value="Asp/Orn_carbamoylTrfase_sf"/>
</dbReference>
<dbReference type="InterPro" id="IPR002082">
    <property type="entry name" value="Asp_carbamoyltransf"/>
</dbReference>
<dbReference type="InterPro" id="IPR006131">
    <property type="entry name" value="Asp_carbamoyltransf_Asp/Orn-bd"/>
</dbReference>
<dbReference type="NCBIfam" id="TIGR00670">
    <property type="entry name" value="asp_carb_tr"/>
    <property type="match status" value="1"/>
</dbReference>
<dbReference type="NCBIfam" id="NF002032">
    <property type="entry name" value="PRK00856.1"/>
    <property type="match status" value="1"/>
</dbReference>
<dbReference type="PANTHER" id="PTHR45753:SF6">
    <property type="entry name" value="ASPARTATE CARBAMOYLTRANSFERASE"/>
    <property type="match status" value="1"/>
</dbReference>
<dbReference type="PANTHER" id="PTHR45753">
    <property type="entry name" value="ORNITHINE CARBAMOYLTRANSFERASE, MITOCHONDRIAL"/>
    <property type="match status" value="1"/>
</dbReference>
<dbReference type="Pfam" id="PF00185">
    <property type="entry name" value="OTCace"/>
    <property type="match status" value="1"/>
</dbReference>
<dbReference type="Pfam" id="PF02729">
    <property type="entry name" value="OTCace_N"/>
    <property type="match status" value="1"/>
</dbReference>
<dbReference type="PRINTS" id="PR00100">
    <property type="entry name" value="AOTCASE"/>
</dbReference>
<dbReference type="PRINTS" id="PR00101">
    <property type="entry name" value="ATCASE"/>
</dbReference>
<dbReference type="SUPFAM" id="SSF53671">
    <property type="entry name" value="Aspartate/ornithine carbamoyltransferase"/>
    <property type="match status" value="1"/>
</dbReference>
<dbReference type="PROSITE" id="PS00097">
    <property type="entry name" value="CARBAMOYLTRANSFERASE"/>
    <property type="match status" value="1"/>
</dbReference>
<gene>
    <name evidence="1" type="primary">pyrB</name>
    <name type="ordered locus">BOV_A0564</name>
</gene>
<proteinExistence type="inferred from homology"/>
<sequence length="322" mass="34802">MTNQTVSPLFPHRHLLGIKGLSPLDILCLLDLADQEIAVSRQPEKKKSVLRGRTQINLFFEASTRTQSSFELAGKRLGADVMNMSVGNSSVKKGETLIDTAMTLNAMQPDILVIRHASAGAAALLAQKVGCSVVNAGDGAHEHPTQALLDALTIRRAKGQIENLIVAICGDVLHSRVARSNILLLNALGARVRVVAPSTLLPAGMADMSVEVFNSMEEGLKDADVVMMLRLQRERMAGSFVPSVREYFHFYGLDREKLKFAKPDALVMHPGPMNRGVEIASDVADGPQSVIQQQVEMGVAVRMAVMEALLDPRRNPGNGEPA</sequence>
<protein>
    <recommendedName>
        <fullName evidence="1">Aspartate carbamoyltransferase catalytic subunit</fullName>
        <ecNumber evidence="1">2.1.3.2</ecNumber>
    </recommendedName>
    <alternativeName>
        <fullName evidence="1">Aspartate transcarbamylase</fullName>
        <shortName evidence="1">ATCase</shortName>
    </alternativeName>
</protein>
<reference key="1">
    <citation type="journal article" date="2009" name="PLoS ONE">
        <title>Genome degradation in Brucella ovis corresponds with narrowing of its host range and tissue tropism.</title>
        <authorList>
            <person name="Tsolis R.M."/>
            <person name="Seshadri R."/>
            <person name="Santos R.L."/>
            <person name="Sangari F.J."/>
            <person name="Lobo J.M."/>
            <person name="de Jong M.F."/>
            <person name="Ren Q."/>
            <person name="Myers G."/>
            <person name="Brinkac L.M."/>
            <person name="Nelson W.C."/>
            <person name="Deboy R.T."/>
            <person name="Angiuoli S."/>
            <person name="Khouri H."/>
            <person name="Dimitrov G."/>
            <person name="Robinson J.R."/>
            <person name="Mulligan S."/>
            <person name="Walker R.L."/>
            <person name="Elzer P.E."/>
            <person name="Hassan K.A."/>
            <person name="Paulsen I.T."/>
        </authorList>
    </citation>
    <scope>NUCLEOTIDE SEQUENCE [LARGE SCALE GENOMIC DNA]</scope>
    <source>
        <strain>ATCC 25840 / 63/290 / NCTC 10512</strain>
    </source>
</reference>